<keyword id="KW-0014">AIDS</keyword>
<keyword id="KW-1032">Host cell membrane</keyword>
<keyword id="KW-1035">Host cytoplasm</keyword>
<keyword id="KW-1043">Host membrane</keyword>
<keyword id="KW-0945">Host-virus interaction</keyword>
<keyword id="KW-0472">Membrane</keyword>
<keyword id="KW-0479">Metal-binding</keyword>
<keyword id="KW-0597">Phosphoprotein</keyword>
<keyword id="KW-0694">RNA-binding</keyword>
<keyword id="KW-0832">Ubl conjugation</keyword>
<keyword id="KW-0833">Ubl conjugation pathway</keyword>
<keyword id="KW-0946">Virion</keyword>
<keyword id="KW-0862">Zinc</keyword>
<dbReference type="EMBL" id="M38429">
    <property type="protein sequence ID" value="AAB03746.1"/>
    <property type="molecule type" value="Genomic_RNA"/>
</dbReference>
<dbReference type="SMR" id="P20877"/>
<dbReference type="Proteomes" id="UP000007695">
    <property type="component" value="Genome"/>
</dbReference>
<dbReference type="GO" id="GO:0030430">
    <property type="term" value="C:host cell cytoplasm"/>
    <property type="evidence" value="ECO:0007669"/>
    <property type="project" value="UniProtKB-SubCell"/>
</dbReference>
<dbReference type="GO" id="GO:0020002">
    <property type="term" value="C:host cell plasma membrane"/>
    <property type="evidence" value="ECO:0007669"/>
    <property type="project" value="UniProtKB-SubCell"/>
</dbReference>
<dbReference type="GO" id="GO:0016020">
    <property type="term" value="C:membrane"/>
    <property type="evidence" value="ECO:0007669"/>
    <property type="project" value="UniProtKB-UniRule"/>
</dbReference>
<dbReference type="GO" id="GO:0044423">
    <property type="term" value="C:virion component"/>
    <property type="evidence" value="ECO:0007669"/>
    <property type="project" value="UniProtKB-UniRule"/>
</dbReference>
<dbReference type="GO" id="GO:0046872">
    <property type="term" value="F:metal ion binding"/>
    <property type="evidence" value="ECO:0007669"/>
    <property type="project" value="UniProtKB-KW"/>
</dbReference>
<dbReference type="GO" id="GO:0003723">
    <property type="term" value="F:RNA binding"/>
    <property type="evidence" value="ECO:0007669"/>
    <property type="project" value="UniProtKB-UniRule"/>
</dbReference>
<dbReference type="GO" id="GO:0019058">
    <property type="term" value="P:viral life cycle"/>
    <property type="evidence" value="ECO:0007669"/>
    <property type="project" value="InterPro"/>
</dbReference>
<dbReference type="HAMAP" id="MF_04081">
    <property type="entry name" value="HIV_VIF"/>
    <property type="match status" value="1"/>
</dbReference>
<dbReference type="InterPro" id="IPR000475">
    <property type="entry name" value="Vif"/>
</dbReference>
<dbReference type="Pfam" id="PF00559">
    <property type="entry name" value="Vif"/>
    <property type="match status" value="1"/>
</dbReference>
<dbReference type="PRINTS" id="PR00349">
    <property type="entry name" value="VIRIONINFFCT"/>
</dbReference>
<comment type="function">
    <text evidence="2">Counteracts the innate antiviral activity of host APOBEC3F and APOBEC3G by promoting their ubiquitination and degradation. Acts as a substrate recognition component of an E3 ubiquitin-protein ligase complex: mechanistically, Vif hijacks a host cullin-5-RING E3 ubiquitin-protein ligase complex (ECS complex) and the transcription coactivator CBFB/CBF-beta to form an active E3 ubiquitin-protein ligase complex that targets APOBEC3G and APOBEC3F for polyubiquitination, leading to their degradation by the proteasome. Vif interaction with APOBEC3G also blocks its cytidine deaminase activity in a proteasome-independent manner, suggesting a dual inhibitory mechanism. May interact directly with APOBEC3G mRNA in order to inhibit its translation. Association with CBFB/CBF-beta also inhibits the transcription coactivator activity of CBFB/CBF-beta. Seems to play a role in viral morphology by affecting the stability of the viral nucleoprotein core. Finally, Vif also contributes to the G2 cell cycle arrest observed in HIV infected cells.</text>
</comment>
<comment type="subunit">
    <text evidence="1">Homomultimer; in vitro and presumably in vivo. Interacts with viral RNA and Pr55Gag precursor; these interactions mediate Vif incorporation into the virion. Interacts with the viral reverse transcriptase. Forms cullin-5-RING E3 ubiquitin-protein ligase complex (ECS complex) by interacting with host CUL5, RBX2, elongin BC complex (ELOB and ELOC) and CBFB/CBF-beta. Within the ECS complex, Vif interacts directly with host CUL5, ELOC and APOBEC (APOBEC3F and APOBEC3G) substrates. The ECS complex also contains some single-stranded RNA (ssRNA) that acts as a glue that bridges Vif with APOBEC (APOBEC3F and APOBEC3G) substrates. Interacts with host UBCE7IP1 isoform 3/ZIN and possibly with SAT. Interacts with host tyrosine kinases HCK and FYN; these interactions may decrease level of phosphorylated APOBEC3G incorporation into virions. Interacts with host ABCE1; this interaction may play a role in protecting viral RNA from damage during viral assembly. Interacts with host MDM2; this interaction targets Vif for degradation by the proteasome.</text>
</comment>
<comment type="subcellular location">
    <subcellularLocation>
        <location evidence="2">Host cytoplasm</location>
    </subcellularLocation>
    <subcellularLocation>
        <location evidence="2">Host cell membrane</location>
        <topology evidence="2">Peripheral membrane protein</topology>
        <orientation evidence="2">Cytoplasmic side</orientation>
    </subcellularLocation>
    <subcellularLocation>
        <location evidence="2">Virion</location>
    </subcellularLocation>
    <text evidence="2">In the cytoplasm, seems to colocalize with intermediate filament vimentin. A fraction is associated with the cytoplasmic side of cellular membranes, presumably via the interaction with Pr55Gag precursor. Incorporated in virions at a ratio of approximately 7 to 20 molecules per virion.</text>
</comment>
<comment type="induction">
    <text evidence="2">Expressed late during infection in a Rev-dependent manner.</text>
</comment>
<comment type="domain">
    <text evidence="2">The BC-like-box motif mediates the interaction with elongin BC complex.</text>
</comment>
<comment type="domain">
    <text evidence="2">The HCCH motif (H-x(5)-C-x(18)-C-x(5)-H) mediates the interaction with CUL5.</text>
</comment>
<comment type="PTM">
    <text evidence="2">Processed in virion by the viral protease.</text>
</comment>
<comment type="PTM">
    <text evidence="2">Highly phosphorylated on serine and threonine residues.</text>
</comment>
<comment type="PTM">
    <text evidence="2">Polyubiquitinated and degraded by the proteasome in the presence of APOBEC3G.</text>
</comment>
<comment type="miscellaneous">
    <text evidence="2">Vif-defective viruses show catastrophic failure in reverse transcription due to APOBEC-induced mutations that initiate a DNA base repair pathway and compromise the structural integrity of the ssDNA. In the absence of Vif, the virion is morphologically abnormal.</text>
</comment>
<comment type="miscellaneous">
    <text evidence="2">HIV-1 lineages are divided in three main groups, M (for Major), O (for Outlier), and N (for New, or Non-M, Non-O). The vast majority of strains found worldwide belong to the group M. Group O seems to be endemic to and largely confined to Cameroon and neighboring countries in West Central Africa, where these viruses represent a small minority of HIV-1 strains. The group N is represented by a limited number of isolates from Cameroonian persons. The group M is further subdivided in 9 clades or subtypes (A to D, F to H, J and K).</text>
</comment>
<comment type="miscellaneous">
    <text evidence="2">Required for replication in 'nonpermissive' cells, including primary T-cells, macrophages and certain T-cell lines, but is dispensable for replication in 'permissive' cell lines, such as 293T cells. In nonpermissive cells, Vif-defective viruses can produce virions, but they fail to complete reverse transcription and cannot successfully infect new cells.</text>
</comment>
<comment type="similarity">
    <text evidence="2">Belongs to the primate lentivirus group Vif protein family.</text>
</comment>
<reference key="1">
    <citation type="submission" date="1988-12" db="EMBL/GenBank/DDBJ databases">
        <authorList>
            <person name="Koyanagi S."/>
            <person name="Chen I.S.Y."/>
        </authorList>
    </citation>
    <scope>NUCLEOTIDE SEQUENCE [GENOMIC RNA]</scope>
</reference>
<reference key="2">
    <citation type="journal article" date="2004" name="Trends Mol. Med.">
        <title>The viral infectivity factor (Vif) of HIV-1 unveiled.</title>
        <authorList>
            <person name="Rose K.M."/>
            <person name="Marin M."/>
            <person name="Kozak S.L."/>
            <person name="Kabat D."/>
        </authorList>
    </citation>
    <scope>REVIEW</scope>
</reference>
<organism>
    <name type="scientific">Human immunodeficiency virus type 1 group M subtype B (isolate JRCSF)</name>
    <name type="common">HIV-1</name>
    <dbReference type="NCBI Taxonomy" id="11688"/>
    <lineage>
        <taxon>Viruses</taxon>
        <taxon>Riboviria</taxon>
        <taxon>Pararnavirae</taxon>
        <taxon>Artverviricota</taxon>
        <taxon>Revtraviricetes</taxon>
        <taxon>Ortervirales</taxon>
        <taxon>Retroviridae</taxon>
        <taxon>Orthoretrovirinae</taxon>
        <taxon>Lentivirus</taxon>
        <taxon>Human immunodeficiency virus type 1</taxon>
    </lineage>
</organism>
<proteinExistence type="inferred from homology"/>
<name>VIF_HV1JR</name>
<sequence length="192" mass="22443">MENRWQVMIVWQVDRMRIRTWNSLVKHHMYISGKAKGWIYKHHYESTNPRVSSEVQIPLGDARLVITTYWGLHTGERDWHLGQGVSMEWRTRRYSTQVDPDLADQLIHLYYFDCFSESAIRNAILGHIVSPRCEYQAGHSKVGSLQYLALTALIKPKKIKPPLPSVKKLTEDRWNKPQKTKGHRGSHTMNGH</sequence>
<feature type="chain" id="PRO_0000043044" description="Virion infectivity factor" evidence="2">
    <location>
        <begin position="1"/>
        <end position="192"/>
    </location>
</feature>
<feature type="chain" id="PRO_0000043045" description="p17" evidence="2">
    <location>
        <begin position="1"/>
        <end position="150"/>
    </location>
</feature>
<feature type="chain" id="PRO_0000043046" description="p7" evidence="2">
    <location>
        <begin position="151"/>
        <end position="192"/>
    </location>
</feature>
<feature type="region of interest" description="Interaction with host APOBEC3F; F1-box" evidence="2">
    <location>
        <begin position="14"/>
        <end position="17"/>
    </location>
</feature>
<feature type="region of interest" description="Interaction with host APOBEC3G; G-box" evidence="2">
    <location>
        <begin position="40"/>
        <end position="44"/>
    </location>
</feature>
<feature type="region of interest" description="Interaction with host APOBEC3F and APOBEC3G; FG-box" evidence="2">
    <location>
        <begin position="54"/>
        <end position="72"/>
    </location>
</feature>
<feature type="region of interest" description="Interaction with host APOBEC3F; F2-box" evidence="2">
    <location>
        <begin position="74"/>
        <end position="79"/>
    </location>
</feature>
<feature type="region of interest" description="RNA-binding" evidence="2">
    <location>
        <begin position="75"/>
        <end position="114"/>
    </location>
</feature>
<feature type="region of interest" description="SOCS box-like" evidence="2">
    <location>
        <begin position="151"/>
        <end position="180"/>
    </location>
</feature>
<feature type="region of interest" description="Multimerization" evidence="2">
    <location>
        <begin position="151"/>
        <end position="164"/>
    </location>
</feature>
<feature type="region of interest" description="Disordered" evidence="3">
    <location>
        <begin position="164"/>
        <end position="192"/>
    </location>
</feature>
<feature type="region of interest" description="Membrane association" evidence="2">
    <location>
        <begin position="171"/>
        <end position="172"/>
    </location>
</feature>
<feature type="short sequence motif" description="HCCH motif" evidence="2">
    <location>
        <begin position="108"/>
        <end position="139"/>
    </location>
</feature>
<feature type="short sequence motif" description="BC-box-like motif" evidence="2">
    <location>
        <begin position="144"/>
        <end position="153"/>
    </location>
</feature>
<feature type="compositionally biased region" description="Basic residues" evidence="3">
    <location>
        <begin position="176"/>
        <end position="186"/>
    </location>
</feature>
<feature type="binding site" evidence="2">
    <location>
        <position position="108"/>
    </location>
    <ligand>
        <name>Zn(2+)</name>
        <dbReference type="ChEBI" id="CHEBI:29105"/>
    </ligand>
</feature>
<feature type="binding site" evidence="2">
    <location>
        <position position="114"/>
    </location>
    <ligand>
        <name>Zn(2+)</name>
        <dbReference type="ChEBI" id="CHEBI:29105"/>
    </ligand>
</feature>
<feature type="binding site" evidence="2">
    <location>
        <position position="133"/>
    </location>
    <ligand>
        <name>Zn(2+)</name>
        <dbReference type="ChEBI" id="CHEBI:29105"/>
    </ligand>
</feature>
<feature type="binding site" evidence="2">
    <location>
        <position position="139"/>
    </location>
    <ligand>
        <name>Zn(2+)</name>
        <dbReference type="ChEBI" id="CHEBI:29105"/>
    </ligand>
</feature>
<feature type="site" description="Cleavage in virion (by viral protease)" evidence="2">
    <location>
        <begin position="150"/>
        <end position="151"/>
    </location>
</feature>
<feature type="modified residue" description="Phosphothreonine; by host MAP4K1" evidence="2">
    <location>
        <position position="96"/>
    </location>
</feature>
<feature type="modified residue" description="Phosphoserine; by host" evidence="2">
    <location>
        <position position="144"/>
    </location>
</feature>
<feature type="modified residue" description="Phosphoserine; by host MAP4K1" evidence="2">
    <location>
        <position position="165"/>
    </location>
</feature>
<feature type="modified residue" description="Phosphothreonine; by host" evidence="2">
    <location>
        <position position="188"/>
    </location>
</feature>
<accession>P20877</accession>
<evidence type="ECO:0000250" key="1">
    <source>
        <dbReference type="UniProtKB" id="O70897"/>
    </source>
</evidence>
<evidence type="ECO:0000255" key="2">
    <source>
        <dbReference type="HAMAP-Rule" id="MF_04081"/>
    </source>
</evidence>
<evidence type="ECO:0000256" key="3">
    <source>
        <dbReference type="SAM" id="MobiDB-lite"/>
    </source>
</evidence>
<protein>
    <recommendedName>
        <fullName evidence="2">Virion infectivity factor</fullName>
        <shortName evidence="2">Vif</shortName>
    </recommendedName>
    <alternativeName>
        <fullName evidence="2">SOR protein</fullName>
    </alternativeName>
    <component>
        <recommendedName>
            <fullName evidence="2">p17</fullName>
        </recommendedName>
    </component>
    <component>
        <recommendedName>
            <fullName evidence="2">p7</fullName>
        </recommendedName>
    </component>
</protein>
<gene>
    <name evidence="2" type="primary">vif</name>
</gene>
<organismHost>
    <name type="scientific">Homo sapiens</name>
    <name type="common">Human</name>
    <dbReference type="NCBI Taxonomy" id="9606"/>
</organismHost>